<dbReference type="EC" id="2.3.2.6" evidence="1"/>
<dbReference type="EMBL" id="CP000941">
    <property type="protein sequence ID" value="ACA11779.1"/>
    <property type="molecule type" value="Genomic_DNA"/>
</dbReference>
<dbReference type="RefSeq" id="WP_004083748.1">
    <property type="nucleotide sequence ID" value="NC_010513.1"/>
</dbReference>
<dbReference type="SMR" id="B0U6R3"/>
<dbReference type="KEGG" id="xfm:Xfasm12_0789"/>
<dbReference type="HOGENOM" id="CLU_075045_0_0_6"/>
<dbReference type="GO" id="GO:0005737">
    <property type="term" value="C:cytoplasm"/>
    <property type="evidence" value="ECO:0007669"/>
    <property type="project" value="UniProtKB-SubCell"/>
</dbReference>
<dbReference type="GO" id="GO:0008914">
    <property type="term" value="F:leucyl-tRNA--protein transferase activity"/>
    <property type="evidence" value="ECO:0007669"/>
    <property type="project" value="UniProtKB-UniRule"/>
</dbReference>
<dbReference type="GO" id="GO:0030163">
    <property type="term" value="P:protein catabolic process"/>
    <property type="evidence" value="ECO:0007669"/>
    <property type="project" value="UniProtKB-UniRule"/>
</dbReference>
<dbReference type="FunFam" id="3.30.70.3550:FF:000001">
    <property type="entry name" value="Leucyl/phenylalanyl-tRNA--protein transferase"/>
    <property type="match status" value="1"/>
</dbReference>
<dbReference type="Gene3D" id="3.40.630.70">
    <property type="entry name" value="Leucyl/phenylalanyl-tRNA-protein transferase, C-terminal domain"/>
    <property type="match status" value="1"/>
</dbReference>
<dbReference type="Gene3D" id="3.30.70.3550">
    <property type="entry name" value="Leucyl/phenylalanyl-tRNA-protein transferase, N-terminal domain"/>
    <property type="match status" value="1"/>
</dbReference>
<dbReference type="HAMAP" id="MF_00688">
    <property type="entry name" value="Leu_Phe_trans"/>
    <property type="match status" value="1"/>
</dbReference>
<dbReference type="InterPro" id="IPR016181">
    <property type="entry name" value="Acyl_CoA_acyltransferase"/>
</dbReference>
<dbReference type="InterPro" id="IPR004616">
    <property type="entry name" value="Leu/Phe-tRNA_Trfase"/>
</dbReference>
<dbReference type="InterPro" id="IPR042203">
    <property type="entry name" value="Leu/Phe-tRNA_Trfase_C"/>
</dbReference>
<dbReference type="InterPro" id="IPR042221">
    <property type="entry name" value="Leu/Phe-tRNA_Trfase_N"/>
</dbReference>
<dbReference type="NCBIfam" id="TIGR00667">
    <property type="entry name" value="aat"/>
    <property type="match status" value="1"/>
</dbReference>
<dbReference type="PANTHER" id="PTHR30098">
    <property type="entry name" value="LEUCYL/PHENYLALANYL-TRNA--PROTEIN TRANSFERASE"/>
    <property type="match status" value="1"/>
</dbReference>
<dbReference type="PANTHER" id="PTHR30098:SF2">
    <property type="entry name" value="LEUCYL_PHENYLALANYL-TRNA--PROTEIN TRANSFERASE"/>
    <property type="match status" value="1"/>
</dbReference>
<dbReference type="Pfam" id="PF03588">
    <property type="entry name" value="Leu_Phe_trans"/>
    <property type="match status" value="1"/>
</dbReference>
<dbReference type="SUPFAM" id="SSF55729">
    <property type="entry name" value="Acyl-CoA N-acyltransferases (Nat)"/>
    <property type="match status" value="1"/>
</dbReference>
<feature type="chain" id="PRO_1000131959" description="Leucyl/phenylalanyl-tRNA--protein transferase">
    <location>
        <begin position="1"/>
        <end position="244"/>
    </location>
</feature>
<feature type="region of interest" description="Disordered" evidence="2">
    <location>
        <begin position="1"/>
        <end position="22"/>
    </location>
</feature>
<reference key="1">
    <citation type="journal article" date="2010" name="J. Bacteriol.">
        <title>Whole genome sequences of two Xylella fastidiosa strains (M12 and M23) causing almond leaf scorch disease in California.</title>
        <authorList>
            <person name="Chen J."/>
            <person name="Xie G."/>
            <person name="Han S."/>
            <person name="Chertkov O."/>
            <person name="Sims D."/>
            <person name="Civerolo E.L."/>
        </authorList>
    </citation>
    <scope>NUCLEOTIDE SEQUENCE [LARGE SCALE GENOMIC DNA]</scope>
    <source>
        <strain>M12</strain>
    </source>
</reference>
<organism>
    <name type="scientific">Xylella fastidiosa (strain M12)</name>
    <dbReference type="NCBI Taxonomy" id="405440"/>
    <lineage>
        <taxon>Bacteria</taxon>
        <taxon>Pseudomonadati</taxon>
        <taxon>Pseudomonadota</taxon>
        <taxon>Gammaproteobacteria</taxon>
        <taxon>Lysobacterales</taxon>
        <taxon>Lysobacteraceae</taxon>
        <taxon>Xylella</taxon>
    </lineage>
</organism>
<accession>B0U6R3</accession>
<comment type="function">
    <text evidence="1">Functions in the N-end rule pathway of protein degradation where it conjugates Leu, Phe and, less efficiently, Met from aminoacyl-tRNAs to the N-termini of proteins containing an N-terminal arginine or lysine.</text>
</comment>
<comment type="catalytic activity">
    <reaction evidence="1">
        <text>N-terminal L-lysyl-[protein] + L-leucyl-tRNA(Leu) = N-terminal L-leucyl-L-lysyl-[protein] + tRNA(Leu) + H(+)</text>
        <dbReference type="Rhea" id="RHEA:12340"/>
        <dbReference type="Rhea" id="RHEA-COMP:9613"/>
        <dbReference type="Rhea" id="RHEA-COMP:9622"/>
        <dbReference type="Rhea" id="RHEA-COMP:12670"/>
        <dbReference type="Rhea" id="RHEA-COMP:12671"/>
        <dbReference type="ChEBI" id="CHEBI:15378"/>
        <dbReference type="ChEBI" id="CHEBI:65249"/>
        <dbReference type="ChEBI" id="CHEBI:78442"/>
        <dbReference type="ChEBI" id="CHEBI:78494"/>
        <dbReference type="ChEBI" id="CHEBI:133043"/>
        <dbReference type="EC" id="2.3.2.6"/>
    </reaction>
</comment>
<comment type="catalytic activity">
    <reaction evidence="1">
        <text>N-terminal L-arginyl-[protein] + L-leucyl-tRNA(Leu) = N-terminal L-leucyl-L-arginyl-[protein] + tRNA(Leu) + H(+)</text>
        <dbReference type="Rhea" id="RHEA:50416"/>
        <dbReference type="Rhea" id="RHEA-COMP:9613"/>
        <dbReference type="Rhea" id="RHEA-COMP:9622"/>
        <dbReference type="Rhea" id="RHEA-COMP:12672"/>
        <dbReference type="Rhea" id="RHEA-COMP:12673"/>
        <dbReference type="ChEBI" id="CHEBI:15378"/>
        <dbReference type="ChEBI" id="CHEBI:64719"/>
        <dbReference type="ChEBI" id="CHEBI:78442"/>
        <dbReference type="ChEBI" id="CHEBI:78494"/>
        <dbReference type="ChEBI" id="CHEBI:133044"/>
        <dbReference type="EC" id="2.3.2.6"/>
    </reaction>
</comment>
<comment type="catalytic activity">
    <reaction evidence="1">
        <text>L-phenylalanyl-tRNA(Phe) + an N-terminal L-alpha-aminoacyl-[protein] = an N-terminal L-phenylalanyl-L-alpha-aminoacyl-[protein] + tRNA(Phe)</text>
        <dbReference type="Rhea" id="RHEA:43632"/>
        <dbReference type="Rhea" id="RHEA-COMP:9668"/>
        <dbReference type="Rhea" id="RHEA-COMP:9699"/>
        <dbReference type="Rhea" id="RHEA-COMP:10636"/>
        <dbReference type="Rhea" id="RHEA-COMP:10637"/>
        <dbReference type="ChEBI" id="CHEBI:78442"/>
        <dbReference type="ChEBI" id="CHEBI:78531"/>
        <dbReference type="ChEBI" id="CHEBI:78597"/>
        <dbReference type="ChEBI" id="CHEBI:83561"/>
        <dbReference type="EC" id="2.3.2.6"/>
    </reaction>
</comment>
<comment type="subcellular location">
    <subcellularLocation>
        <location evidence="1">Cytoplasm</location>
    </subcellularLocation>
</comment>
<comment type="similarity">
    <text evidence="1">Belongs to the L/F-transferase family.</text>
</comment>
<sequence length="244" mass="27528">MHSQPYLLSPAPNNTPFPPAEHALREPNGLLAIGGDLTPQRLLAAYRSGIFPWFTEGQPPLWWSPDPRTVFHSDSIHLSRRFRRSLRTSTWRVRADTMFAAVIDACASTPRRGQDGTWITANMREAYLTLHQHGYAHSVEVFDGTMLVGGIYGVAIGRMFFGESMFSTHNGASKIALASLAYFLHTHSVPLIDAQVENQHLLNLGAERWPRRDFLTYVRRLITQTELPACWSVLFGEKLSRDLV</sequence>
<evidence type="ECO:0000255" key="1">
    <source>
        <dbReference type="HAMAP-Rule" id="MF_00688"/>
    </source>
</evidence>
<evidence type="ECO:0000256" key="2">
    <source>
        <dbReference type="SAM" id="MobiDB-lite"/>
    </source>
</evidence>
<gene>
    <name evidence="1" type="primary">aat</name>
    <name type="ordered locus">Xfasm12_0789</name>
</gene>
<protein>
    <recommendedName>
        <fullName evidence="1">Leucyl/phenylalanyl-tRNA--protein transferase</fullName>
        <ecNumber evidence="1">2.3.2.6</ecNumber>
    </recommendedName>
    <alternativeName>
        <fullName evidence="1">L/F-transferase</fullName>
    </alternativeName>
    <alternativeName>
        <fullName evidence="1">Leucyltransferase</fullName>
    </alternativeName>
    <alternativeName>
        <fullName evidence="1">Phenyalanyltransferase</fullName>
    </alternativeName>
</protein>
<name>LFTR_XYLFM</name>
<keyword id="KW-0012">Acyltransferase</keyword>
<keyword id="KW-0963">Cytoplasm</keyword>
<keyword id="KW-0808">Transferase</keyword>
<proteinExistence type="inferred from homology"/>